<name>RL2_CHLPB</name>
<reference key="1">
    <citation type="submission" date="2008-06" db="EMBL/GenBank/DDBJ databases">
        <title>Complete sequence of Chlorobium phaeobacteroides BS1.</title>
        <authorList>
            <consortium name="US DOE Joint Genome Institute"/>
            <person name="Lucas S."/>
            <person name="Copeland A."/>
            <person name="Lapidus A."/>
            <person name="Glavina del Rio T."/>
            <person name="Dalin E."/>
            <person name="Tice H."/>
            <person name="Bruce D."/>
            <person name="Goodwin L."/>
            <person name="Pitluck S."/>
            <person name="Schmutz J."/>
            <person name="Larimer F."/>
            <person name="Land M."/>
            <person name="Hauser L."/>
            <person name="Kyrpides N."/>
            <person name="Ovchinnikova G."/>
            <person name="Li T."/>
            <person name="Liu Z."/>
            <person name="Zhao F."/>
            <person name="Overmann J."/>
            <person name="Bryant D.A."/>
            <person name="Richardson P."/>
        </authorList>
    </citation>
    <scope>NUCLEOTIDE SEQUENCE [LARGE SCALE GENOMIC DNA]</scope>
    <source>
        <strain>BS1</strain>
    </source>
</reference>
<keyword id="KW-0687">Ribonucleoprotein</keyword>
<keyword id="KW-0689">Ribosomal protein</keyword>
<keyword id="KW-0694">RNA-binding</keyword>
<keyword id="KW-0699">rRNA-binding</keyword>
<proteinExistence type="inferred from homology"/>
<comment type="function">
    <text evidence="1">One of the primary rRNA binding proteins. Required for association of the 30S and 50S subunits to form the 70S ribosome, for tRNA binding and peptide bond formation. It has been suggested to have peptidyltransferase activity; this is somewhat controversial. Makes several contacts with the 16S rRNA in the 70S ribosome.</text>
</comment>
<comment type="subunit">
    <text evidence="1">Part of the 50S ribosomal subunit. Forms a bridge to the 30S subunit in the 70S ribosome.</text>
</comment>
<comment type="similarity">
    <text evidence="1">Belongs to the universal ribosomal protein uL2 family.</text>
</comment>
<protein>
    <recommendedName>
        <fullName evidence="1">Large ribosomal subunit protein uL2</fullName>
    </recommendedName>
    <alternativeName>
        <fullName evidence="3">50S ribosomal protein L2</fullName>
    </alternativeName>
</protein>
<dbReference type="EMBL" id="CP001101">
    <property type="protein sequence ID" value="ACE05197.1"/>
    <property type="molecule type" value="Genomic_DNA"/>
</dbReference>
<dbReference type="SMR" id="B3EP58"/>
<dbReference type="STRING" id="331678.Cphamn1_2293"/>
<dbReference type="KEGG" id="cpb:Cphamn1_2293"/>
<dbReference type="eggNOG" id="COG0090">
    <property type="taxonomic scope" value="Bacteria"/>
</dbReference>
<dbReference type="HOGENOM" id="CLU_036235_2_1_10"/>
<dbReference type="OrthoDB" id="9778722at2"/>
<dbReference type="GO" id="GO:0015934">
    <property type="term" value="C:large ribosomal subunit"/>
    <property type="evidence" value="ECO:0007669"/>
    <property type="project" value="InterPro"/>
</dbReference>
<dbReference type="GO" id="GO:0019843">
    <property type="term" value="F:rRNA binding"/>
    <property type="evidence" value="ECO:0007669"/>
    <property type="project" value="UniProtKB-UniRule"/>
</dbReference>
<dbReference type="GO" id="GO:0003735">
    <property type="term" value="F:structural constituent of ribosome"/>
    <property type="evidence" value="ECO:0007669"/>
    <property type="project" value="InterPro"/>
</dbReference>
<dbReference type="GO" id="GO:0016740">
    <property type="term" value="F:transferase activity"/>
    <property type="evidence" value="ECO:0007669"/>
    <property type="project" value="InterPro"/>
</dbReference>
<dbReference type="GO" id="GO:0002181">
    <property type="term" value="P:cytoplasmic translation"/>
    <property type="evidence" value="ECO:0007669"/>
    <property type="project" value="TreeGrafter"/>
</dbReference>
<dbReference type="FunFam" id="2.30.30.30:FF:000001">
    <property type="entry name" value="50S ribosomal protein L2"/>
    <property type="match status" value="1"/>
</dbReference>
<dbReference type="FunFam" id="2.40.50.140:FF:000003">
    <property type="entry name" value="50S ribosomal protein L2"/>
    <property type="match status" value="1"/>
</dbReference>
<dbReference type="FunFam" id="4.10.950.10:FF:000001">
    <property type="entry name" value="50S ribosomal protein L2"/>
    <property type="match status" value="1"/>
</dbReference>
<dbReference type="Gene3D" id="2.30.30.30">
    <property type="match status" value="1"/>
</dbReference>
<dbReference type="Gene3D" id="2.40.50.140">
    <property type="entry name" value="Nucleic acid-binding proteins"/>
    <property type="match status" value="1"/>
</dbReference>
<dbReference type="Gene3D" id="4.10.950.10">
    <property type="entry name" value="Ribosomal protein L2, domain 3"/>
    <property type="match status" value="1"/>
</dbReference>
<dbReference type="HAMAP" id="MF_01320_B">
    <property type="entry name" value="Ribosomal_uL2_B"/>
    <property type="match status" value="1"/>
</dbReference>
<dbReference type="InterPro" id="IPR012340">
    <property type="entry name" value="NA-bd_OB-fold"/>
</dbReference>
<dbReference type="InterPro" id="IPR014722">
    <property type="entry name" value="Rib_uL2_dom2"/>
</dbReference>
<dbReference type="InterPro" id="IPR002171">
    <property type="entry name" value="Ribosomal_uL2"/>
</dbReference>
<dbReference type="InterPro" id="IPR005880">
    <property type="entry name" value="Ribosomal_uL2_bac/org-type"/>
</dbReference>
<dbReference type="InterPro" id="IPR022669">
    <property type="entry name" value="Ribosomal_uL2_C"/>
</dbReference>
<dbReference type="InterPro" id="IPR014726">
    <property type="entry name" value="Ribosomal_uL2_dom3"/>
</dbReference>
<dbReference type="InterPro" id="IPR022666">
    <property type="entry name" value="Ribosomal_uL2_RNA-bd_dom"/>
</dbReference>
<dbReference type="InterPro" id="IPR008991">
    <property type="entry name" value="Translation_prot_SH3-like_sf"/>
</dbReference>
<dbReference type="NCBIfam" id="TIGR01171">
    <property type="entry name" value="rplB_bact"/>
    <property type="match status" value="1"/>
</dbReference>
<dbReference type="PANTHER" id="PTHR13691:SF5">
    <property type="entry name" value="LARGE RIBOSOMAL SUBUNIT PROTEIN UL2M"/>
    <property type="match status" value="1"/>
</dbReference>
<dbReference type="PANTHER" id="PTHR13691">
    <property type="entry name" value="RIBOSOMAL PROTEIN L2"/>
    <property type="match status" value="1"/>
</dbReference>
<dbReference type="Pfam" id="PF00181">
    <property type="entry name" value="Ribosomal_L2"/>
    <property type="match status" value="1"/>
</dbReference>
<dbReference type="Pfam" id="PF03947">
    <property type="entry name" value="Ribosomal_L2_C"/>
    <property type="match status" value="1"/>
</dbReference>
<dbReference type="PIRSF" id="PIRSF002158">
    <property type="entry name" value="Ribosomal_L2"/>
    <property type="match status" value="1"/>
</dbReference>
<dbReference type="SMART" id="SM01383">
    <property type="entry name" value="Ribosomal_L2"/>
    <property type="match status" value="1"/>
</dbReference>
<dbReference type="SMART" id="SM01382">
    <property type="entry name" value="Ribosomal_L2_C"/>
    <property type="match status" value="1"/>
</dbReference>
<dbReference type="SUPFAM" id="SSF50249">
    <property type="entry name" value="Nucleic acid-binding proteins"/>
    <property type="match status" value="1"/>
</dbReference>
<dbReference type="SUPFAM" id="SSF50104">
    <property type="entry name" value="Translation proteins SH3-like domain"/>
    <property type="match status" value="1"/>
</dbReference>
<gene>
    <name evidence="1" type="primary">rplB</name>
    <name type="ordered locus">Cphamn1_2293</name>
</gene>
<feature type="chain" id="PRO_1000141523" description="Large ribosomal subunit protein uL2">
    <location>
        <begin position="1"/>
        <end position="279"/>
    </location>
</feature>
<feature type="region of interest" description="Disordered" evidence="2">
    <location>
        <begin position="34"/>
        <end position="55"/>
    </location>
</feature>
<feature type="region of interest" description="Disordered" evidence="2">
    <location>
        <begin position="221"/>
        <end position="279"/>
    </location>
</feature>
<feature type="compositionally biased region" description="Basic residues" evidence="2">
    <location>
        <begin position="40"/>
        <end position="55"/>
    </location>
</feature>
<feature type="compositionally biased region" description="Gly residues" evidence="2">
    <location>
        <begin position="232"/>
        <end position="242"/>
    </location>
</feature>
<feature type="compositionally biased region" description="Basic residues" evidence="2">
    <location>
        <begin position="259"/>
        <end position="279"/>
    </location>
</feature>
<organism>
    <name type="scientific">Chlorobium phaeobacteroides (strain BS1)</name>
    <dbReference type="NCBI Taxonomy" id="331678"/>
    <lineage>
        <taxon>Bacteria</taxon>
        <taxon>Pseudomonadati</taxon>
        <taxon>Chlorobiota</taxon>
        <taxon>Chlorobiia</taxon>
        <taxon>Chlorobiales</taxon>
        <taxon>Chlorobiaceae</taxon>
        <taxon>Chlorobium/Pelodictyon group</taxon>
        <taxon>Chlorobium</taxon>
    </lineage>
</organism>
<accession>B3EP58</accession>
<evidence type="ECO:0000255" key="1">
    <source>
        <dbReference type="HAMAP-Rule" id="MF_01320"/>
    </source>
</evidence>
<evidence type="ECO:0000256" key="2">
    <source>
        <dbReference type="SAM" id="MobiDB-lite"/>
    </source>
</evidence>
<evidence type="ECO:0000305" key="3"/>
<sequence>MAIRKLGPVTPASRYLSYSKFEEVTKSTPEKSLLAPLKKSGGRNRAGRITSRHKGGGHKRFYRIIDFKRSKDNIPAKVAAIEYDPNRSSRIALLHYADGEKRYILAPKGLKVGDVLHSGDKVDIKVGNSMPLKNIPLGADVHNIELKQGKGGQMARSAGAFATLAAKEGDHATLKLPSGEIRKVRIECRATIGGIGNDDHENIVLGKAGRSRWLGIRPQTRGMAMNPVDHPMGGGEGRSKSGGGRKHPKSPWGQLAKGLKTRNKKKASSKLIVRGRKAK</sequence>